<accession>B9DPN4</accession>
<keyword id="KW-0963">Cytoplasm</keyword>
<keyword id="KW-0285">Flavoprotein</keyword>
<keyword id="KW-0288">FMN</keyword>
<keyword id="KW-0520">NAD</keyword>
<keyword id="KW-0560">Oxidoreductase</keyword>
<keyword id="KW-0665">Pyrimidine biosynthesis</keyword>
<keyword id="KW-1185">Reference proteome</keyword>
<feature type="chain" id="PRO_1000195051" description="Dihydroorotate dehydrogenase B (NAD(+)), catalytic subunit">
    <location>
        <begin position="1"/>
        <end position="305"/>
    </location>
</feature>
<feature type="active site" description="Nucleophile">
    <location>
        <position position="130"/>
    </location>
</feature>
<feature type="binding site" evidence="1">
    <location>
        <position position="21"/>
    </location>
    <ligand>
        <name>FMN</name>
        <dbReference type="ChEBI" id="CHEBI:58210"/>
    </ligand>
</feature>
<feature type="binding site" evidence="1">
    <location>
        <begin position="45"/>
        <end position="46"/>
    </location>
    <ligand>
        <name>FMN</name>
        <dbReference type="ChEBI" id="CHEBI:58210"/>
    </ligand>
</feature>
<feature type="binding site" evidence="1">
    <location>
        <position position="45"/>
    </location>
    <ligand>
        <name>substrate</name>
    </ligand>
</feature>
<feature type="binding site" evidence="1">
    <location>
        <begin position="69"/>
        <end position="73"/>
    </location>
    <ligand>
        <name>substrate</name>
    </ligand>
</feature>
<feature type="binding site" evidence="1">
    <location>
        <position position="99"/>
    </location>
    <ligand>
        <name>FMN</name>
        <dbReference type="ChEBI" id="CHEBI:58210"/>
    </ligand>
</feature>
<feature type="binding site" evidence="1">
    <location>
        <position position="127"/>
    </location>
    <ligand>
        <name>FMN</name>
        <dbReference type="ChEBI" id="CHEBI:58210"/>
    </ligand>
</feature>
<feature type="binding site" evidence="1">
    <location>
        <position position="127"/>
    </location>
    <ligand>
        <name>substrate</name>
    </ligand>
</feature>
<feature type="binding site" evidence="1">
    <location>
        <position position="165"/>
    </location>
    <ligand>
        <name>FMN</name>
        <dbReference type="ChEBI" id="CHEBI:58210"/>
    </ligand>
</feature>
<feature type="binding site" evidence="1">
    <location>
        <position position="190"/>
    </location>
    <ligand>
        <name>FMN</name>
        <dbReference type="ChEBI" id="CHEBI:58210"/>
    </ligand>
</feature>
<feature type="binding site" evidence="1">
    <location>
        <begin position="191"/>
        <end position="192"/>
    </location>
    <ligand>
        <name>substrate</name>
    </ligand>
</feature>
<feature type="binding site" evidence="1">
    <location>
        <position position="216"/>
    </location>
    <ligand>
        <name>FMN</name>
        <dbReference type="ChEBI" id="CHEBI:58210"/>
    </ligand>
</feature>
<feature type="binding site" evidence="1">
    <location>
        <begin position="242"/>
        <end position="243"/>
    </location>
    <ligand>
        <name>FMN</name>
        <dbReference type="ChEBI" id="CHEBI:58210"/>
    </ligand>
</feature>
<feature type="binding site" evidence="1">
    <location>
        <begin position="264"/>
        <end position="265"/>
    </location>
    <ligand>
        <name>FMN</name>
        <dbReference type="ChEBI" id="CHEBI:58210"/>
    </ligand>
</feature>
<proteinExistence type="inferred from homology"/>
<dbReference type="EC" id="1.3.1.14"/>
<dbReference type="EMBL" id="AM295250">
    <property type="protein sequence ID" value="CAL27729.1"/>
    <property type="molecule type" value="Genomic_DNA"/>
</dbReference>
<dbReference type="RefSeq" id="WP_015900071.1">
    <property type="nucleotide sequence ID" value="NC_012121.1"/>
</dbReference>
<dbReference type="SMR" id="B9DPN4"/>
<dbReference type="GeneID" id="93795754"/>
<dbReference type="KEGG" id="sca:SCA_0819"/>
<dbReference type="eggNOG" id="COG0167">
    <property type="taxonomic scope" value="Bacteria"/>
</dbReference>
<dbReference type="HOGENOM" id="CLU_042042_0_0_9"/>
<dbReference type="OrthoDB" id="9794954at2"/>
<dbReference type="BioCyc" id="SCAR396513:SCA_RS04145-MONOMER"/>
<dbReference type="UniPathway" id="UPA00070">
    <property type="reaction ID" value="UER00945"/>
</dbReference>
<dbReference type="Proteomes" id="UP000000444">
    <property type="component" value="Chromosome"/>
</dbReference>
<dbReference type="GO" id="GO:0005737">
    <property type="term" value="C:cytoplasm"/>
    <property type="evidence" value="ECO:0007669"/>
    <property type="project" value="UniProtKB-SubCell"/>
</dbReference>
<dbReference type="GO" id="GO:0004589">
    <property type="term" value="F:dihydroorotate dehydrogenase (NAD+) activity"/>
    <property type="evidence" value="ECO:0007669"/>
    <property type="project" value="UniProtKB-EC"/>
</dbReference>
<dbReference type="GO" id="GO:0006207">
    <property type="term" value="P:'de novo' pyrimidine nucleobase biosynthetic process"/>
    <property type="evidence" value="ECO:0007669"/>
    <property type="project" value="InterPro"/>
</dbReference>
<dbReference type="GO" id="GO:0044205">
    <property type="term" value="P:'de novo' UMP biosynthetic process"/>
    <property type="evidence" value="ECO:0007669"/>
    <property type="project" value="UniProtKB-UniRule"/>
</dbReference>
<dbReference type="CDD" id="cd04740">
    <property type="entry name" value="DHOD_1B_like"/>
    <property type="match status" value="1"/>
</dbReference>
<dbReference type="FunFam" id="3.20.20.70:FF:000069">
    <property type="entry name" value="Dihydroorotate dehydrogenase"/>
    <property type="match status" value="1"/>
</dbReference>
<dbReference type="Gene3D" id="3.20.20.70">
    <property type="entry name" value="Aldolase class I"/>
    <property type="match status" value="1"/>
</dbReference>
<dbReference type="HAMAP" id="MF_00224">
    <property type="entry name" value="DHO_dh_type1"/>
    <property type="match status" value="1"/>
</dbReference>
<dbReference type="InterPro" id="IPR013785">
    <property type="entry name" value="Aldolase_TIM"/>
</dbReference>
<dbReference type="InterPro" id="IPR050074">
    <property type="entry name" value="DHO_dehydrogenase"/>
</dbReference>
<dbReference type="InterPro" id="IPR033888">
    <property type="entry name" value="DHOD_1B"/>
</dbReference>
<dbReference type="InterPro" id="IPR024920">
    <property type="entry name" value="Dihydroorotate_DH_1"/>
</dbReference>
<dbReference type="InterPro" id="IPR012135">
    <property type="entry name" value="Dihydroorotate_DH_1_2"/>
</dbReference>
<dbReference type="InterPro" id="IPR005720">
    <property type="entry name" value="Dihydroorotate_DH_cat"/>
</dbReference>
<dbReference type="InterPro" id="IPR001295">
    <property type="entry name" value="Dihydroorotate_DH_CS"/>
</dbReference>
<dbReference type="InterPro" id="IPR049622">
    <property type="entry name" value="Dihydroorotate_DH_I"/>
</dbReference>
<dbReference type="NCBIfam" id="NF005574">
    <property type="entry name" value="PRK07259.1"/>
    <property type="match status" value="1"/>
</dbReference>
<dbReference type="NCBIfam" id="TIGR01037">
    <property type="entry name" value="pyrD_sub1_fam"/>
    <property type="match status" value="1"/>
</dbReference>
<dbReference type="PANTHER" id="PTHR48109:SF1">
    <property type="entry name" value="DIHYDROOROTATE DEHYDROGENASE (FUMARATE)"/>
    <property type="match status" value="1"/>
</dbReference>
<dbReference type="PANTHER" id="PTHR48109">
    <property type="entry name" value="DIHYDROOROTATE DEHYDROGENASE (QUINONE), MITOCHONDRIAL-RELATED"/>
    <property type="match status" value="1"/>
</dbReference>
<dbReference type="Pfam" id="PF01180">
    <property type="entry name" value="DHO_dh"/>
    <property type="match status" value="1"/>
</dbReference>
<dbReference type="PIRSF" id="PIRSF000164">
    <property type="entry name" value="DHO_oxidase"/>
    <property type="match status" value="1"/>
</dbReference>
<dbReference type="SUPFAM" id="SSF51395">
    <property type="entry name" value="FMN-linked oxidoreductases"/>
    <property type="match status" value="1"/>
</dbReference>
<dbReference type="PROSITE" id="PS00911">
    <property type="entry name" value="DHODEHASE_1"/>
    <property type="match status" value="1"/>
</dbReference>
<dbReference type="PROSITE" id="PS00912">
    <property type="entry name" value="DHODEHASE_2"/>
    <property type="match status" value="1"/>
</dbReference>
<reference key="1">
    <citation type="journal article" date="2009" name="Appl. Environ. Microbiol.">
        <title>Genome analysis of the meat starter culture bacterium Staphylococcus carnosus TM300.</title>
        <authorList>
            <person name="Rosenstein R."/>
            <person name="Nerz C."/>
            <person name="Biswas L."/>
            <person name="Resch A."/>
            <person name="Raddatz G."/>
            <person name="Schuster S.C."/>
            <person name="Goetz F."/>
        </authorList>
    </citation>
    <scope>NUCLEOTIDE SEQUENCE [LARGE SCALE GENOMIC DNA]</scope>
    <source>
        <strain>TM300</strain>
    </source>
</reference>
<organism>
    <name type="scientific">Staphylococcus carnosus (strain TM300)</name>
    <dbReference type="NCBI Taxonomy" id="396513"/>
    <lineage>
        <taxon>Bacteria</taxon>
        <taxon>Bacillati</taxon>
        <taxon>Bacillota</taxon>
        <taxon>Bacilli</taxon>
        <taxon>Bacillales</taxon>
        <taxon>Staphylococcaceae</taxon>
        <taxon>Staphylococcus</taxon>
    </lineage>
</organism>
<evidence type="ECO:0000250" key="1"/>
<evidence type="ECO:0000305" key="2"/>
<gene>
    <name type="primary">pyrD</name>
    <name type="ordered locus">Sca_0819</name>
</gene>
<sequence length="305" mass="32792">MSRLNVELPGLDLKNPVMPASGCFAFGAEFSQFYDLSELGAIMIKAATKEARYGNETPRVAETDSGMINAIGLQNPGVHHIIEHELKKLEQFDVPIIANVAGSVEEDYVYVAEHISKAPNVKALELNISCPNVKEGGMQFGVDPQVAAELTRKVKAVSEVPVYVKLSPNVTNIVEMAKAIAEYADGLTMINTLVGLRIDGKSGKPIIANTIGGLSGPAIKPVALRMVYEVRKAIDIPIIAMGGVQNAQDVIDYISVGANAVAVGTANFQNPMVCKEIIDELPTLLDKLGVDHINELYGRTHEVMK</sequence>
<name>PYRDB_STACT</name>
<protein>
    <recommendedName>
        <fullName>Dihydroorotate dehydrogenase B (NAD(+)), catalytic subunit</fullName>
        <shortName>DHOD B</shortName>
        <shortName>DHODase B</shortName>
        <shortName>DHOdehase B</shortName>
        <ecNumber>1.3.1.14</ecNumber>
    </recommendedName>
    <alternativeName>
        <fullName>Dihydroorotate oxidase B</fullName>
    </alternativeName>
    <alternativeName>
        <fullName>Orotate reductase (NADH)</fullName>
    </alternativeName>
</protein>
<comment type="function">
    <text evidence="1">Catalyzes the conversion of dihydroorotate to orotate with NAD(+) as electron acceptor.</text>
</comment>
<comment type="catalytic activity">
    <reaction>
        <text>(S)-dihydroorotate + NAD(+) = orotate + NADH + H(+)</text>
        <dbReference type="Rhea" id="RHEA:13513"/>
        <dbReference type="ChEBI" id="CHEBI:15378"/>
        <dbReference type="ChEBI" id="CHEBI:30839"/>
        <dbReference type="ChEBI" id="CHEBI:30864"/>
        <dbReference type="ChEBI" id="CHEBI:57540"/>
        <dbReference type="ChEBI" id="CHEBI:57945"/>
        <dbReference type="EC" id="1.3.1.14"/>
    </reaction>
</comment>
<comment type="cofactor">
    <cofactor evidence="1">
        <name>FMN</name>
        <dbReference type="ChEBI" id="CHEBI:58210"/>
    </cofactor>
    <text evidence="1">Binds 1 FMN per subunit.</text>
</comment>
<comment type="pathway">
    <text>Pyrimidine metabolism; UMP biosynthesis via de novo pathway; orotate from (S)-dihydroorotate (NAD(+) route): step 1/1.</text>
</comment>
<comment type="subunit">
    <text evidence="1">Heterotetramer of 2 PyrK and 2 PyrD type B subunits.</text>
</comment>
<comment type="subcellular location">
    <subcellularLocation>
        <location evidence="1">Cytoplasm</location>
    </subcellularLocation>
</comment>
<comment type="similarity">
    <text evidence="2">Belongs to the dihydroorotate dehydrogenase family. Type 1 subfamily.</text>
</comment>